<feature type="chain" id="PRO_0000091041" description="Elongation factor 2">
    <location>
        <begin position="1"/>
        <end position="732"/>
    </location>
</feature>
<feature type="domain" description="tr-type G">
    <location>
        <begin position="19"/>
        <end position="260"/>
    </location>
</feature>
<feature type="binding site" evidence="1">
    <location>
        <begin position="28"/>
        <end position="35"/>
    </location>
    <ligand>
        <name>GTP</name>
        <dbReference type="ChEBI" id="CHEBI:37565"/>
    </ligand>
</feature>
<feature type="binding site" evidence="1">
    <location>
        <begin position="94"/>
        <end position="98"/>
    </location>
    <ligand>
        <name>GTP</name>
        <dbReference type="ChEBI" id="CHEBI:37565"/>
    </ligand>
</feature>
<feature type="binding site" evidence="1">
    <location>
        <begin position="148"/>
        <end position="151"/>
    </location>
    <ligand>
        <name>GTP</name>
        <dbReference type="ChEBI" id="CHEBI:37565"/>
    </ligand>
</feature>
<feature type="modified residue" description="Diphthamide" evidence="1">
    <location>
        <position position="597"/>
    </location>
</feature>
<evidence type="ECO:0000250" key="1"/>
<evidence type="ECO:0000305" key="2"/>
<proteinExistence type="inferred from homology"/>
<organism>
    <name type="scientific">Pyrococcus abyssi (strain GE5 / Orsay)</name>
    <dbReference type="NCBI Taxonomy" id="272844"/>
    <lineage>
        <taxon>Archaea</taxon>
        <taxon>Methanobacteriati</taxon>
        <taxon>Methanobacteriota</taxon>
        <taxon>Thermococci</taxon>
        <taxon>Thermococcales</taxon>
        <taxon>Thermococcaceae</taxon>
        <taxon>Pyrococcus</taxon>
    </lineage>
</organism>
<sequence>MGRREEMIAKIKELMLQPERIRNIGIAAHIDHGKTTLSDNLLAGAGMISEELAGKQLVLDFDEQEQARGITINAANVSMVHNYEGKDYLINLIDTPGHVDFGGDVTRAMRAIDGVIIVVDAVEGVMPQTETVVRQALREYVKPVLFINKVDRLIRELKLTPQQMMERFSKIIMDVNRLIQRYAPEEYKKQWMVKVEDGSVAFGSAYYNWALSVPFMKRTGVKFNEIIDLTLKGDHKTLRQKAPLHVVVLDMVVKHLPNPIEAQKYRIPHLWQGDINSDVGQAMLNCDPKGKMVMVVTKIIIDKHAGEVATGRVWSGTVKSGQEVYLINTKRKARIQQVGIYMGPERINMEAVPAGNIVAVTGLRDAMAGETVAEEPIEPFEALHYVSEPVVTVAIEAKNVKDLPRLIEALRQLAKEDPTLHVKIDEETGQHLLSGMGELHLEVKLYKLKKDWGIDIDVSEPIVVYRESITKPSPMVEGKSPNRHNRFYIVVEPMPDEIYNAIKEGIIPEGRIKNPKEVAKKLAELGMDYEIARGIVDVYNGNMFLDNTKGVQYLNEVMDLLIDGFHQAMDEGPLAKEPVMKVIVRLIDAQVHEDNVHRGPAQIYPAIRTAIHCAMMKSNPVLYEPYQKVIINIPYEYMGAVSREITQRRGQLVDMKQEGEVMTIIAEAPVAEMFGFAGAIRSATSGRALWSTEHAGFKRVPNELAQQIIRQIRQRKGLDPNPPTEKDVCPLF</sequence>
<keyword id="KW-0963">Cytoplasm</keyword>
<keyword id="KW-0251">Elongation factor</keyword>
<keyword id="KW-0342">GTP-binding</keyword>
<keyword id="KW-0547">Nucleotide-binding</keyword>
<keyword id="KW-0648">Protein biosynthesis</keyword>
<accession>Q9V1Z8</accession>
<accession>G8ZHR0</accession>
<protein>
    <recommendedName>
        <fullName>Elongation factor 2</fullName>
        <shortName>EF-2</shortName>
    </recommendedName>
</protein>
<dbReference type="EMBL" id="AJ248283">
    <property type="protein sequence ID" value="CAB49200.1"/>
    <property type="molecule type" value="Genomic_DNA"/>
</dbReference>
<dbReference type="EMBL" id="HE613800">
    <property type="protein sequence ID" value="CCE69653.1"/>
    <property type="molecule type" value="Genomic_DNA"/>
</dbReference>
<dbReference type="PIR" id="A75219">
    <property type="entry name" value="A75219"/>
</dbReference>
<dbReference type="RefSeq" id="WP_010867400.1">
    <property type="nucleotide sequence ID" value="NC_000868.1"/>
</dbReference>
<dbReference type="SMR" id="Q9V1Z8"/>
<dbReference type="STRING" id="272844.PAB0187"/>
<dbReference type="KEGG" id="pab:PAB0187"/>
<dbReference type="PATRIC" id="fig|272844.11.peg.296"/>
<dbReference type="eggNOG" id="arCOG01559">
    <property type="taxonomic scope" value="Archaea"/>
</dbReference>
<dbReference type="HOGENOM" id="CLU_002794_11_1_2"/>
<dbReference type="OrthoDB" id="6290at2157"/>
<dbReference type="PhylomeDB" id="Q9V1Z8"/>
<dbReference type="Proteomes" id="UP000000810">
    <property type="component" value="Chromosome"/>
</dbReference>
<dbReference type="Proteomes" id="UP000009139">
    <property type="component" value="Chromosome"/>
</dbReference>
<dbReference type="GO" id="GO:0005829">
    <property type="term" value="C:cytosol"/>
    <property type="evidence" value="ECO:0007669"/>
    <property type="project" value="TreeGrafter"/>
</dbReference>
<dbReference type="GO" id="GO:1990904">
    <property type="term" value="C:ribonucleoprotein complex"/>
    <property type="evidence" value="ECO:0007669"/>
    <property type="project" value="TreeGrafter"/>
</dbReference>
<dbReference type="GO" id="GO:0005525">
    <property type="term" value="F:GTP binding"/>
    <property type="evidence" value="ECO:0007669"/>
    <property type="project" value="UniProtKB-UniRule"/>
</dbReference>
<dbReference type="GO" id="GO:0003924">
    <property type="term" value="F:GTPase activity"/>
    <property type="evidence" value="ECO:0007669"/>
    <property type="project" value="InterPro"/>
</dbReference>
<dbReference type="GO" id="GO:0003746">
    <property type="term" value="F:translation elongation factor activity"/>
    <property type="evidence" value="ECO:0007669"/>
    <property type="project" value="UniProtKB-UniRule"/>
</dbReference>
<dbReference type="CDD" id="cd01681">
    <property type="entry name" value="aeEF2_snRNP_like_IV"/>
    <property type="match status" value="1"/>
</dbReference>
<dbReference type="CDD" id="cd01885">
    <property type="entry name" value="EF2"/>
    <property type="match status" value="1"/>
</dbReference>
<dbReference type="CDD" id="cd16268">
    <property type="entry name" value="EF2_II"/>
    <property type="match status" value="1"/>
</dbReference>
<dbReference type="CDD" id="cd16261">
    <property type="entry name" value="EF2_snRNP_III"/>
    <property type="match status" value="1"/>
</dbReference>
<dbReference type="CDD" id="cd01514">
    <property type="entry name" value="Elongation_Factor_C"/>
    <property type="match status" value="1"/>
</dbReference>
<dbReference type="FunFam" id="3.30.230.10:FF:000009">
    <property type="entry name" value="116 kDa U5 small nuclear ribonucleoprotein component"/>
    <property type="match status" value="1"/>
</dbReference>
<dbReference type="FunFam" id="2.40.30.10:FF:000110">
    <property type="entry name" value="Elongation factor 2"/>
    <property type="match status" value="1"/>
</dbReference>
<dbReference type="FunFam" id="3.30.70.240:FF:000010">
    <property type="entry name" value="Elongation factor 2"/>
    <property type="match status" value="1"/>
</dbReference>
<dbReference type="FunFam" id="3.40.50.300:FF:000684">
    <property type="entry name" value="Elongation factor 2"/>
    <property type="match status" value="1"/>
</dbReference>
<dbReference type="FunFam" id="3.30.70.870:FF:000002">
    <property type="entry name" value="Translation elongation factor 2"/>
    <property type="match status" value="1"/>
</dbReference>
<dbReference type="Gene3D" id="3.30.230.10">
    <property type="match status" value="1"/>
</dbReference>
<dbReference type="Gene3D" id="3.30.70.240">
    <property type="match status" value="1"/>
</dbReference>
<dbReference type="Gene3D" id="3.30.70.870">
    <property type="entry name" value="Elongation Factor G (Translational Gtpase), domain 3"/>
    <property type="match status" value="1"/>
</dbReference>
<dbReference type="Gene3D" id="3.40.50.300">
    <property type="entry name" value="P-loop containing nucleotide triphosphate hydrolases"/>
    <property type="match status" value="1"/>
</dbReference>
<dbReference type="Gene3D" id="2.40.30.10">
    <property type="entry name" value="Translation factors"/>
    <property type="match status" value="1"/>
</dbReference>
<dbReference type="HAMAP" id="MF_00054_A">
    <property type="entry name" value="EF_G_EF_2_A"/>
    <property type="match status" value="1"/>
</dbReference>
<dbReference type="InterPro" id="IPR041095">
    <property type="entry name" value="EFG_II"/>
</dbReference>
<dbReference type="InterPro" id="IPR035647">
    <property type="entry name" value="EFG_III/V"/>
</dbReference>
<dbReference type="InterPro" id="IPR000640">
    <property type="entry name" value="EFG_V-like"/>
</dbReference>
<dbReference type="InterPro" id="IPR004161">
    <property type="entry name" value="EFTu-like_2"/>
</dbReference>
<dbReference type="InterPro" id="IPR031157">
    <property type="entry name" value="G_TR_CS"/>
</dbReference>
<dbReference type="InterPro" id="IPR027417">
    <property type="entry name" value="P-loop_NTPase"/>
</dbReference>
<dbReference type="InterPro" id="IPR020568">
    <property type="entry name" value="Ribosomal_Su5_D2-typ_SF"/>
</dbReference>
<dbReference type="InterPro" id="IPR014721">
    <property type="entry name" value="Ribsml_uS5_D2-typ_fold_subgr"/>
</dbReference>
<dbReference type="InterPro" id="IPR005225">
    <property type="entry name" value="Small_GTP-bd"/>
</dbReference>
<dbReference type="InterPro" id="IPR000795">
    <property type="entry name" value="T_Tr_GTP-bd_dom"/>
</dbReference>
<dbReference type="InterPro" id="IPR009000">
    <property type="entry name" value="Transl_B-barrel_sf"/>
</dbReference>
<dbReference type="InterPro" id="IPR004543">
    <property type="entry name" value="Transl_elong_EFG/EF2_arc"/>
</dbReference>
<dbReference type="InterPro" id="IPR005517">
    <property type="entry name" value="Transl_elong_EFG/EF2_IV"/>
</dbReference>
<dbReference type="NCBIfam" id="TIGR00490">
    <property type="entry name" value="aEF-2"/>
    <property type="match status" value="1"/>
</dbReference>
<dbReference type="NCBIfam" id="TIGR00231">
    <property type="entry name" value="small_GTP"/>
    <property type="match status" value="1"/>
</dbReference>
<dbReference type="PANTHER" id="PTHR42908:SF3">
    <property type="entry name" value="ELONGATION FACTOR-LIKE GTPASE 1"/>
    <property type="match status" value="1"/>
</dbReference>
<dbReference type="PANTHER" id="PTHR42908">
    <property type="entry name" value="TRANSLATION ELONGATION FACTOR-RELATED"/>
    <property type="match status" value="1"/>
</dbReference>
<dbReference type="Pfam" id="PF00679">
    <property type="entry name" value="EFG_C"/>
    <property type="match status" value="1"/>
</dbReference>
<dbReference type="Pfam" id="PF14492">
    <property type="entry name" value="EFG_III"/>
    <property type="match status" value="1"/>
</dbReference>
<dbReference type="Pfam" id="PF03764">
    <property type="entry name" value="EFG_IV"/>
    <property type="match status" value="1"/>
</dbReference>
<dbReference type="Pfam" id="PF00009">
    <property type="entry name" value="GTP_EFTU"/>
    <property type="match status" value="1"/>
</dbReference>
<dbReference type="Pfam" id="PF03144">
    <property type="entry name" value="GTP_EFTU_D2"/>
    <property type="match status" value="1"/>
</dbReference>
<dbReference type="PRINTS" id="PR00315">
    <property type="entry name" value="ELONGATNFCT"/>
</dbReference>
<dbReference type="SMART" id="SM00838">
    <property type="entry name" value="EFG_C"/>
    <property type="match status" value="1"/>
</dbReference>
<dbReference type="SMART" id="SM00889">
    <property type="entry name" value="EFG_IV"/>
    <property type="match status" value="1"/>
</dbReference>
<dbReference type="SUPFAM" id="SSF54980">
    <property type="entry name" value="EF-G C-terminal domain-like"/>
    <property type="match status" value="2"/>
</dbReference>
<dbReference type="SUPFAM" id="SSF52540">
    <property type="entry name" value="P-loop containing nucleoside triphosphate hydrolases"/>
    <property type="match status" value="1"/>
</dbReference>
<dbReference type="SUPFAM" id="SSF54211">
    <property type="entry name" value="Ribosomal protein S5 domain 2-like"/>
    <property type="match status" value="1"/>
</dbReference>
<dbReference type="SUPFAM" id="SSF50447">
    <property type="entry name" value="Translation proteins"/>
    <property type="match status" value="1"/>
</dbReference>
<dbReference type="PROSITE" id="PS00301">
    <property type="entry name" value="G_TR_1"/>
    <property type="match status" value="1"/>
</dbReference>
<dbReference type="PROSITE" id="PS51722">
    <property type="entry name" value="G_TR_2"/>
    <property type="match status" value="1"/>
</dbReference>
<gene>
    <name type="primary">fusA</name>
    <name type="synonym">fus</name>
    <name type="ordered locus">PYRAB02760</name>
    <name type="ORF">PAB0187</name>
</gene>
<reference key="1">
    <citation type="journal article" date="2003" name="Mol. Microbiol.">
        <title>An integrated analysis of the genome of the hyperthermophilic archaeon Pyrococcus abyssi.</title>
        <authorList>
            <person name="Cohen G.N."/>
            <person name="Barbe V."/>
            <person name="Flament D."/>
            <person name="Galperin M."/>
            <person name="Heilig R."/>
            <person name="Lecompte O."/>
            <person name="Poch O."/>
            <person name="Prieur D."/>
            <person name="Querellou J."/>
            <person name="Ripp R."/>
            <person name="Thierry J.-C."/>
            <person name="Van der Oost J."/>
            <person name="Weissenbach J."/>
            <person name="Zivanovic Y."/>
            <person name="Forterre P."/>
        </authorList>
    </citation>
    <scope>NUCLEOTIDE SEQUENCE [LARGE SCALE GENOMIC DNA]</scope>
    <source>
        <strain>GE5 / Orsay</strain>
    </source>
</reference>
<reference key="2">
    <citation type="journal article" date="2012" name="Curr. Microbiol.">
        <title>Re-annotation of two hyperthermophilic archaea Pyrococcus abyssi GE5 and Pyrococcus furiosus DSM 3638.</title>
        <authorList>
            <person name="Gao J."/>
            <person name="Wang J."/>
        </authorList>
    </citation>
    <scope>GENOME REANNOTATION</scope>
    <source>
        <strain>GE5 / Orsay</strain>
    </source>
</reference>
<name>EF2_PYRAB</name>
<comment type="function">
    <text evidence="1">Catalyzes the GTP-dependent ribosomal translocation step during translation elongation. During this step, the ribosome changes from the pre-translocational (PRE) to the post-translocational (POST) state as the newly formed A-site-bound peptidyl-tRNA and P-site-bound deacylated tRNA move to the P and E sites, respectively. Catalyzes the coordinated movement of the two tRNA molecules, the mRNA and conformational changes in the ribosome (By similarity).</text>
</comment>
<comment type="subcellular location">
    <subcellularLocation>
        <location evidence="1">Cytoplasm</location>
    </subcellularLocation>
</comment>
<comment type="similarity">
    <text evidence="2">Belongs to the TRAFAC class translation factor GTPase superfamily. Classic translation factor GTPase family. EF-G/EF-2 subfamily.</text>
</comment>